<feature type="chain" id="PRO_0000431945" description="Probable tape measure protein">
    <location>
        <begin position="1"/>
        <end position="944"/>
    </location>
</feature>
<feature type="coiled-coil region" evidence="2">
    <location>
        <begin position="13"/>
        <end position="52"/>
    </location>
</feature>
<protein>
    <recommendedName>
        <fullName evidence="1">Probable tape measure protein</fullName>
        <shortName>TMP</shortName>
    </recommendedName>
</protein>
<keyword id="KW-0175">Coiled coil</keyword>
<keyword id="KW-1185">Reference proteome</keyword>
<keyword id="KW-1188">Viral release from host cell</keyword>
<keyword id="KW-1245">Viral tail assembly</keyword>
<accession>Q24LI1</accession>
<proteinExistence type="inferred from homology"/>
<name>TMP_BPPCD</name>
<dbReference type="EMBL" id="AY855346">
    <property type="protein sequence ID" value="AAZ32268.1"/>
    <property type="molecule type" value="Genomic_DNA"/>
</dbReference>
<dbReference type="RefSeq" id="YP_529568.1">
    <property type="nucleotide sequence ID" value="NC_007917.1"/>
</dbReference>
<dbReference type="SMR" id="Q24LI1"/>
<dbReference type="GeneID" id="3974472"/>
<dbReference type="KEGG" id="vg:3974472"/>
<dbReference type="Proteomes" id="UP000006649">
    <property type="component" value="Segment"/>
</dbReference>
<dbReference type="GO" id="GO:0098003">
    <property type="term" value="P:viral tail assembly"/>
    <property type="evidence" value="ECO:0007669"/>
    <property type="project" value="UniProtKB-KW"/>
</dbReference>
<dbReference type="InterPro" id="IPR010090">
    <property type="entry name" value="Phage_tape_meas"/>
</dbReference>
<dbReference type="NCBIfam" id="TIGR01760">
    <property type="entry name" value="tape_meas_TP901"/>
    <property type="match status" value="1"/>
</dbReference>
<dbReference type="PANTHER" id="PTHR37813">
    <property type="entry name" value="FELS-2 PROPHAGE PROTEIN"/>
    <property type="match status" value="1"/>
</dbReference>
<dbReference type="PANTHER" id="PTHR37813:SF1">
    <property type="entry name" value="FELS-2 PROPHAGE PROTEIN"/>
    <property type="match status" value="1"/>
</dbReference>
<dbReference type="Pfam" id="PF10145">
    <property type="entry name" value="PhageMin_Tail"/>
    <property type="match status" value="1"/>
</dbReference>
<organismHost>
    <name type="scientific">Clostridioides difficile</name>
    <name type="common">Peptoclostridium difficile</name>
    <dbReference type="NCBI Taxonomy" id="1496"/>
</organismHost>
<evidence type="ECO:0000250" key="1">
    <source>
        <dbReference type="UniProtKB" id="O64314"/>
    </source>
</evidence>
<evidence type="ECO:0000255" key="2"/>
<evidence type="ECO:0000305" key="3"/>
<sequence>MSAGSRALEAVIRMRDEASRTLRQVRDATRALQNQTNSTSQAQERLQEQFRKVSNAAKIAGAGIVTGIGAGLVSASKAGAEFETAMTKTSTMFGDTKVDTENLNNKVLELSKNTGIAASSIGESLYNALSSGIPVTKDMGSAMDFMTKNAKLSKAGFTDIDTALTATAKVLNAYKMDVSETDRVHKVMMQTQNKGITTVGELGATLAQVTPTASAMSFSFEQVGASLANMTAQGTPTAQATTQLNSLLAELGKTGTVANKSLLSATKGTKYAGKSFKELMQAGVPLNEILNLMDGSAKKNKKSLIDMFGSIEAGKAALALSGQNSEQYTNNLKAMSTQADVVSSAYAKMSNTLESKVGILKESFKNLGIEIYSKLKEPLKNAAETGIQCLSDLDKQFSSGSLKAGISQIAQSFGDLTSTIIKVATKALPTMIKSLSWVLKNGPTIASVLVSIKVASIMTSAVKSIVALKKAWIAAKLAVRVYMVGMAEAGTVLSGFQILVGVLTKNMTIAQARTMLLAKASALLGGPIGIAIVAITALVAGLVVLWNTNKGFRDFVINAWNNIKETTTKVWGGICNFFTQTIPQAWNDLCTSFSNAVQWFGEMWNNIKQAFINGWNAIVAFFTQTIPTWINNIGVWFGQLPAKIGYGLGFALGKIISWGISVWTYLVTNVPIWINNVVTFFAQLPNKIWVWLVSTVQKIGQWGIAMLTSAQIYTSMIINNIVTFFTTLPGRIWTWLTNTVQKVVTWGSQMATKGKEGAKKLINTVVDTLKSLPKKVMDIGKNIVKGLWNGITGAGGWLKGKVNDFAKGVIDGFKNGFGVHSPSWKLRDLVGRFLPLGIWERYKSRIAKFEEYIDNVVSNLTQRMYKPQEIEESDYTRKYKEAIAQRTEQNTINKTDSKTTNNKEDNNITININLGGVTVKEEADINKLTKMLVREIKLGIAGGV</sequence>
<comment type="function">
    <text evidence="1">Serves as a base for tail tube protein polymerization and acts as a template for tail length determination.</text>
</comment>
<comment type="similarity">
    <text evidence="3">Belongs to the P2likevirus tape measure protein family.</text>
</comment>
<reference key="1">
    <citation type="journal article" date="2006" name="J. Bacteriol.">
        <title>Genomic organization and molecular characterization of Clostridium difficile bacteriophage PhiCD119.</title>
        <authorList>
            <person name="Govind R."/>
            <person name="Fralick J.A."/>
            <person name="Rolfe R.D."/>
        </authorList>
    </citation>
    <scope>NUCLEOTIDE SEQUENCE [GENOMIC DNA]</scope>
</reference>
<organism>
    <name type="scientific">Clostridium phage phiCD119 (strain Clostridium difficile/United States/Govind/2006)</name>
    <name type="common">Bacteriophage phiCD119</name>
    <dbReference type="NCBI Taxonomy" id="2883936"/>
    <lineage>
        <taxon>Viruses</taxon>
        <taxon>Duplodnaviria</taxon>
        <taxon>Heunggongvirae</taxon>
        <taxon>Uroviricota</taxon>
        <taxon>Caudoviricetes</taxon>
        <taxon>Lubbockvirus</taxon>
        <taxon>Lubbockvirus CD119</taxon>
    </lineage>
</organism>